<keyword id="KW-0963">Cytoplasm</keyword>
<keyword id="KW-0460">Magnesium</keyword>
<keyword id="KW-0479">Metal-binding</keyword>
<keyword id="KW-1185">Reference proteome</keyword>
<keyword id="KW-0808">Transferase</keyword>
<dbReference type="EC" id="2.5.1.-"/>
<dbReference type="EMBL" id="AE000666">
    <property type="protein sequence ID" value="AAB84557.1"/>
    <property type="molecule type" value="Genomic_DNA"/>
</dbReference>
<dbReference type="PIR" id="G69165">
    <property type="entry name" value="G69165"/>
</dbReference>
<dbReference type="RefSeq" id="WP_010875690.1">
    <property type="nucleotide sequence ID" value="NC_000916.1"/>
</dbReference>
<dbReference type="SMR" id="O26156"/>
<dbReference type="FunCoup" id="O26156">
    <property type="interactions" value="59"/>
</dbReference>
<dbReference type="STRING" id="187420.MTH_50"/>
<dbReference type="PaxDb" id="187420-MTH_50"/>
<dbReference type="EnsemblBacteria" id="AAB84557">
    <property type="protein sequence ID" value="AAB84557"/>
    <property type="gene ID" value="MTH_50"/>
</dbReference>
<dbReference type="GeneID" id="77402498"/>
<dbReference type="KEGG" id="mth:MTH_50"/>
<dbReference type="PATRIC" id="fig|187420.15.peg.48"/>
<dbReference type="HOGENOM" id="CLU_014015_2_1_2"/>
<dbReference type="InParanoid" id="O26156"/>
<dbReference type="Proteomes" id="UP000005223">
    <property type="component" value="Chromosome"/>
</dbReference>
<dbReference type="GO" id="GO:0005737">
    <property type="term" value="C:cytoplasm"/>
    <property type="evidence" value="ECO:0007669"/>
    <property type="project" value="UniProtKB-SubCell"/>
</dbReference>
<dbReference type="GO" id="GO:0046872">
    <property type="term" value="F:metal ion binding"/>
    <property type="evidence" value="ECO:0007669"/>
    <property type="project" value="UniProtKB-KW"/>
</dbReference>
<dbReference type="GO" id="GO:0004659">
    <property type="term" value="F:prenyltransferase activity"/>
    <property type="evidence" value="ECO:0007669"/>
    <property type="project" value="InterPro"/>
</dbReference>
<dbReference type="GO" id="GO:0008299">
    <property type="term" value="P:isoprenoid biosynthetic process"/>
    <property type="evidence" value="ECO:0007669"/>
    <property type="project" value="InterPro"/>
</dbReference>
<dbReference type="CDD" id="cd00685">
    <property type="entry name" value="Trans_IPPS_HT"/>
    <property type="match status" value="1"/>
</dbReference>
<dbReference type="Gene3D" id="1.10.600.10">
    <property type="entry name" value="Farnesyl Diphosphate Synthase"/>
    <property type="match status" value="1"/>
</dbReference>
<dbReference type="InterPro" id="IPR008949">
    <property type="entry name" value="Isoprenoid_synthase_dom_sf"/>
</dbReference>
<dbReference type="InterPro" id="IPR053491">
    <property type="entry name" value="Isoprenyl_diphosphate_synthase"/>
</dbReference>
<dbReference type="InterPro" id="IPR000092">
    <property type="entry name" value="Polyprenyl_synt"/>
</dbReference>
<dbReference type="InterPro" id="IPR033749">
    <property type="entry name" value="Polyprenyl_synt_CS"/>
</dbReference>
<dbReference type="NCBIfam" id="NF040698">
    <property type="entry name" value="IdsA_Meth"/>
    <property type="match status" value="1"/>
</dbReference>
<dbReference type="PANTHER" id="PTHR12001">
    <property type="entry name" value="GERANYLGERANYL PYROPHOSPHATE SYNTHASE"/>
    <property type="match status" value="1"/>
</dbReference>
<dbReference type="PANTHER" id="PTHR12001:SF85">
    <property type="entry name" value="SHORT CHAIN ISOPRENYL DIPHOSPHATE SYNTHASE"/>
    <property type="match status" value="1"/>
</dbReference>
<dbReference type="Pfam" id="PF00348">
    <property type="entry name" value="polyprenyl_synt"/>
    <property type="match status" value="1"/>
</dbReference>
<dbReference type="SFLD" id="SFLDS00005">
    <property type="entry name" value="Isoprenoid_Synthase_Type_I"/>
    <property type="match status" value="1"/>
</dbReference>
<dbReference type="SFLD" id="SFLDG01017">
    <property type="entry name" value="Polyprenyl_Transferase_Like"/>
    <property type="match status" value="1"/>
</dbReference>
<dbReference type="SUPFAM" id="SSF48576">
    <property type="entry name" value="Terpenoid synthases"/>
    <property type="match status" value="1"/>
</dbReference>
<dbReference type="PROSITE" id="PS00723">
    <property type="entry name" value="POLYPRENYL_SYNTHASE_1"/>
    <property type="match status" value="1"/>
</dbReference>
<dbReference type="PROSITE" id="PS00444">
    <property type="entry name" value="POLYPRENYL_SYNTHASE_2"/>
    <property type="match status" value="1"/>
</dbReference>
<proteinExistence type="inferred from homology"/>
<accession>O26156</accession>
<evidence type="ECO:0000250" key="1"/>
<evidence type="ECO:0000250" key="2">
    <source>
        <dbReference type="UniProtKB" id="P14324"/>
    </source>
</evidence>
<evidence type="ECO:0000250" key="3">
    <source>
        <dbReference type="UniProtKB" id="Q12051"/>
    </source>
</evidence>
<evidence type="ECO:0000305" key="4"/>
<name>IDSA_METTH</name>
<protein>
    <recommendedName>
        <fullName>Short chain isoprenyl diphosphate synthase</fullName>
        <ecNumber>2.5.1.-</ecNumber>
    </recommendedName>
</protein>
<reference key="1">
    <citation type="journal article" date="1997" name="J. Bacteriol.">
        <title>Complete genome sequence of Methanobacterium thermoautotrophicum deltaH: functional analysis and comparative genomics.</title>
        <authorList>
            <person name="Smith D.R."/>
            <person name="Doucette-Stamm L.A."/>
            <person name="Deloughery C."/>
            <person name="Lee H.-M."/>
            <person name="Dubois J."/>
            <person name="Aldredge T."/>
            <person name="Bashirzadeh R."/>
            <person name="Blakely D."/>
            <person name="Cook R."/>
            <person name="Gilbert K."/>
            <person name="Harrison D."/>
            <person name="Hoang L."/>
            <person name="Keagle P."/>
            <person name="Lumm W."/>
            <person name="Pothier B."/>
            <person name="Qiu D."/>
            <person name="Spadafora R."/>
            <person name="Vicare R."/>
            <person name="Wang Y."/>
            <person name="Wierzbowski J."/>
            <person name="Gibson R."/>
            <person name="Jiwani N."/>
            <person name="Caruso A."/>
            <person name="Bush D."/>
            <person name="Safer H."/>
            <person name="Patwell D."/>
            <person name="Prabhakar S."/>
            <person name="McDougall S."/>
            <person name="Shimer G."/>
            <person name="Goyal A."/>
            <person name="Pietrovski S."/>
            <person name="Church G.M."/>
            <person name="Daniels C.J."/>
            <person name="Mao J.-I."/>
            <person name="Rice P."/>
            <person name="Noelling J."/>
            <person name="Reeve J.N."/>
        </authorList>
    </citation>
    <scope>NUCLEOTIDE SEQUENCE [LARGE SCALE GENOMIC DNA]</scope>
    <source>
        <strain>ATCC 29096 / DSM 1053 / JCM 10044 / NBRC 100330 / Delta H</strain>
    </source>
</reference>
<comment type="cofactor">
    <cofactor evidence="1">
        <name>Mg(2+)</name>
        <dbReference type="ChEBI" id="CHEBI:18420"/>
    </cofactor>
    <text evidence="1">Binds 2 Mg(2+) ions per subunit.</text>
</comment>
<comment type="subunit">
    <text evidence="1">Homodimer.</text>
</comment>
<comment type="subcellular location">
    <subcellularLocation>
        <location evidence="1">Cytoplasm</location>
    </subcellularLocation>
</comment>
<comment type="similarity">
    <text evidence="4">Belongs to the FPP/GGPP synthase family.</text>
</comment>
<feature type="chain" id="PRO_0000123971" description="Short chain isoprenyl diphosphate synthase">
    <location>
        <begin position="1"/>
        <end position="325"/>
    </location>
</feature>
<feature type="binding site" evidence="2">
    <location>
        <position position="44"/>
    </location>
    <ligand>
        <name>isopentenyl diphosphate</name>
        <dbReference type="ChEBI" id="CHEBI:128769"/>
    </ligand>
</feature>
<feature type="binding site" evidence="2">
    <location>
        <position position="47"/>
    </location>
    <ligand>
        <name>isopentenyl diphosphate</name>
        <dbReference type="ChEBI" id="CHEBI:128769"/>
    </ligand>
</feature>
<feature type="binding site" evidence="3">
    <location>
        <position position="76"/>
    </location>
    <ligand>
        <name>isopentenyl diphosphate</name>
        <dbReference type="ChEBI" id="CHEBI:128769"/>
    </ligand>
</feature>
<feature type="binding site" evidence="2">
    <location>
        <position position="83"/>
    </location>
    <ligand>
        <name>Mg(2+)</name>
        <dbReference type="ChEBI" id="CHEBI:18420"/>
        <label>1</label>
    </ligand>
</feature>
<feature type="binding site" evidence="2">
    <location>
        <position position="83"/>
    </location>
    <ligand>
        <name>Mg(2+)</name>
        <dbReference type="ChEBI" id="CHEBI:18420"/>
        <label>2</label>
    </ligand>
</feature>
<feature type="binding site" evidence="2">
    <location>
        <position position="87"/>
    </location>
    <ligand>
        <name>Mg(2+)</name>
        <dbReference type="ChEBI" id="CHEBI:18420"/>
        <label>1</label>
    </ligand>
</feature>
<feature type="binding site" evidence="2">
    <location>
        <position position="87"/>
    </location>
    <ligand>
        <name>Mg(2+)</name>
        <dbReference type="ChEBI" id="CHEBI:18420"/>
        <label>2</label>
    </ligand>
</feature>
<feature type="binding site" evidence="1">
    <location>
        <position position="92"/>
    </location>
    <ligand>
        <name>an all-trans-polyprenyl diphosphate</name>
        <dbReference type="ChEBI" id="CHEBI:58914"/>
    </ligand>
</feature>
<feature type="binding site" evidence="2">
    <location>
        <position position="93"/>
    </location>
    <ligand>
        <name>isopentenyl diphosphate</name>
        <dbReference type="ChEBI" id="CHEBI:128769"/>
    </ligand>
</feature>
<feature type="binding site" evidence="1">
    <location>
        <position position="173"/>
    </location>
    <ligand>
        <name>an all-trans-polyprenyl diphosphate</name>
        <dbReference type="ChEBI" id="CHEBI:58914"/>
    </ligand>
</feature>
<feature type="binding site" evidence="1">
    <location>
        <position position="174"/>
    </location>
    <ligand>
        <name>an all-trans-polyprenyl diphosphate</name>
        <dbReference type="ChEBI" id="CHEBI:58914"/>
    </ligand>
</feature>
<feature type="binding site" evidence="1">
    <location>
        <position position="211"/>
    </location>
    <ligand>
        <name>an all-trans-polyprenyl diphosphate</name>
        <dbReference type="ChEBI" id="CHEBI:58914"/>
    </ligand>
</feature>
<feature type="binding site" evidence="1">
    <location>
        <position position="228"/>
    </location>
    <ligand>
        <name>an all-trans-polyprenyl diphosphate</name>
        <dbReference type="ChEBI" id="CHEBI:58914"/>
    </ligand>
</feature>
<feature type="binding site" evidence="1">
    <location>
        <position position="238"/>
    </location>
    <ligand>
        <name>an all-trans-polyprenyl diphosphate</name>
        <dbReference type="ChEBI" id="CHEBI:58914"/>
    </ligand>
</feature>
<gene>
    <name type="primary">idsA</name>
    <name type="ordered locus">MTH_50</name>
</gene>
<sequence length="325" mass="35485">MMEVMDILRKYSEMADERIRESISDITPETLLRASEHLITAGGKKIRPSLALLSSEAVGGDPGDAAGVAAAIELIHTFSLIHDDIMDDDEIRRGEPAVHVLWGEPMAILAGDVLFSKAFEAVIRNGDSEMVKEALAVVVDSCVKICEGQALDMGFEERLDVTEEEYMEMIYKKTAALIAAATKAGAIMGGGSPQEIAALEDYGRCIGLAFQIHDDYLDVVSDEESLGKPVGSDIAEGKMTLMVVKALERASEKDRERLISILGSGDEKLVAEAIEIFERYGATEYAHAVALDHVRMAKERLEVLEESDAREALAMIADFVLEREH</sequence>
<organism>
    <name type="scientific">Methanothermobacter thermautotrophicus (strain ATCC 29096 / DSM 1053 / JCM 10044 / NBRC 100330 / Delta H)</name>
    <name type="common">Methanobacterium thermoautotrophicum</name>
    <dbReference type="NCBI Taxonomy" id="187420"/>
    <lineage>
        <taxon>Archaea</taxon>
        <taxon>Methanobacteriati</taxon>
        <taxon>Methanobacteriota</taxon>
        <taxon>Methanomada group</taxon>
        <taxon>Methanobacteria</taxon>
        <taxon>Methanobacteriales</taxon>
        <taxon>Methanobacteriaceae</taxon>
        <taxon>Methanothermobacter</taxon>
    </lineage>
</organism>